<name>NAGB_OCEIH</name>
<accession>Q8ESL6</accession>
<protein>
    <recommendedName>
        <fullName evidence="1">Glucosamine-6-phosphate deaminase</fullName>
        <ecNumber evidence="1">3.5.99.6</ecNumber>
    </recommendedName>
    <alternativeName>
        <fullName evidence="1">GlcN6P deaminase</fullName>
        <shortName evidence="1">GNPDA</shortName>
    </alternativeName>
    <alternativeName>
        <fullName evidence="1">Glucosamine-6-phosphate isomerase</fullName>
    </alternativeName>
</protein>
<comment type="function">
    <text evidence="1">Catalyzes the reversible isomerization-deamination of glucosamine 6-phosphate (GlcN6P) to form fructose 6-phosphate (Fru6P) and ammonium ion.</text>
</comment>
<comment type="catalytic activity">
    <reaction evidence="1">
        <text>alpha-D-glucosamine 6-phosphate + H2O = beta-D-fructose 6-phosphate + NH4(+)</text>
        <dbReference type="Rhea" id="RHEA:12172"/>
        <dbReference type="ChEBI" id="CHEBI:15377"/>
        <dbReference type="ChEBI" id="CHEBI:28938"/>
        <dbReference type="ChEBI" id="CHEBI:57634"/>
        <dbReference type="ChEBI" id="CHEBI:75989"/>
        <dbReference type="EC" id="3.5.99.6"/>
    </reaction>
</comment>
<comment type="pathway">
    <text evidence="1">Amino-sugar metabolism; N-acetylneuraminate degradation; D-fructose 6-phosphate from N-acetylneuraminate: step 5/5.</text>
</comment>
<comment type="similarity">
    <text evidence="1">Belongs to the glucosamine/galactosamine-6-phosphate isomerase family. NagB subfamily.</text>
</comment>
<organism>
    <name type="scientific">Oceanobacillus iheyensis (strain DSM 14371 / CIP 107618 / JCM 11309 / KCTC 3954 / HTE831)</name>
    <dbReference type="NCBI Taxonomy" id="221109"/>
    <lineage>
        <taxon>Bacteria</taxon>
        <taxon>Bacillati</taxon>
        <taxon>Bacillota</taxon>
        <taxon>Bacilli</taxon>
        <taxon>Bacillales</taxon>
        <taxon>Bacillaceae</taxon>
        <taxon>Oceanobacillus</taxon>
    </lineage>
</organism>
<reference key="1">
    <citation type="journal article" date="2002" name="Nucleic Acids Res.">
        <title>Genome sequence of Oceanobacillus iheyensis isolated from the Iheya Ridge and its unexpected adaptive capabilities to extreme environments.</title>
        <authorList>
            <person name="Takami H."/>
            <person name="Takaki Y."/>
            <person name="Uchiyama I."/>
        </authorList>
    </citation>
    <scope>NUCLEOTIDE SEQUENCE [LARGE SCALE GENOMIC DNA]</scope>
    <source>
        <strain>DSM 14371 / CIP 107618 / JCM 11309 / KCTC 3954 / HTE831</strain>
    </source>
</reference>
<dbReference type="EC" id="3.5.99.6" evidence="1"/>
<dbReference type="EMBL" id="BA000028">
    <property type="protein sequence ID" value="BAC12567.1"/>
    <property type="molecule type" value="Genomic_DNA"/>
</dbReference>
<dbReference type="RefSeq" id="WP_011065015.1">
    <property type="nucleotide sequence ID" value="NC_004193.1"/>
</dbReference>
<dbReference type="SMR" id="Q8ESL6"/>
<dbReference type="STRING" id="221109.gene:10732815"/>
<dbReference type="KEGG" id="oih:OB0611"/>
<dbReference type="eggNOG" id="COG0363">
    <property type="taxonomic scope" value="Bacteria"/>
</dbReference>
<dbReference type="HOGENOM" id="CLU_049611_1_1_9"/>
<dbReference type="OrthoDB" id="9791139at2"/>
<dbReference type="PhylomeDB" id="Q8ESL6"/>
<dbReference type="UniPathway" id="UPA00629">
    <property type="reaction ID" value="UER00684"/>
</dbReference>
<dbReference type="Proteomes" id="UP000000822">
    <property type="component" value="Chromosome"/>
</dbReference>
<dbReference type="GO" id="GO:0005737">
    <property type="term" value="C:cytoplasm"/>
    <property type="evidence" value="ECO:0007669"/>
    <property type="project" value="TreeGrafter"/>
</dbReference>
<dbReference type="GO" id="GO:0004342">
    <property type="term" value="F:glucosamine-6-phosphate deaminase activity"/>
    <property type="evidence" value="ECO:0007669"/>
    <property type="project" value="UniProtKB-UniRule"/>
</dbReference>
<dbReference type="GO" id="GO:0042802">
    <property type="term" value="F:identical protein binding"/>
    <property type="evidence" value="ECO:0007669"/>
    <property type="project" value="TreeGrafter"/>
</dbReference>
<dbReference type="GO" id="GO:0005975">
    <property type="term" value="P:carbohydrate metabolic process"/>
    <property type="evidence" value="ECO:0007669"/>
    <property type="project" value="InterPro"/>
</dbReference>
<dbReference type="GO" id="GO:0006043">
    <property type="term" value="P:glucosamine catabolic process"/>
    <property type="evidence" value="ECO:0007669"/>
    <property type="project" value="TreeGrafter"/>
</dbReference>
<dbReference type="GO" id="GO:0006046">
    <property type="term" value="P:N-acetylglucosamine catabolic process"/>
    <property type="evidence" value="ECO:0007669"/>
    <property type="project" value="TreeGrafter"/>
</dbReference>
<dbReference type="GO" id="GO:0019262">
    <property type="term" value="P:N-acetylneuraminate catabolic process"/>
    <property type="evidence" value="ECO:0007669"/>
    <property type="project" value="UniProtKB-UniRule"/>
</dbReference>
<dbReference type="CDD" id="cd01399">
    <property type="entry name" value="GlcN6P_deaminase"/>
    <property type="match status" value="1"/>
</dbReference>
<dbReference type="FunFam" id="3.40.50.1360:FF:000003">
    <property type="entry name" value="Glucosamine-6-phosphate deaminase"/>
    <property type="match status" value="1"/>
</dbReference>
<dbReference type="Gene3D" id="3.40.50.1360">
    <property type="match status" value="1"/>
</dbReference>
<dbReference type="HAMAP" id="MF_01241">
    <property type="entry name" value="GlcN6P_deamin"/>
    <property type="match status" value="1"/>
</dbReference>
<dbReference type="InterPro" id="IPR006148">
    <property type="entry name" value="Glc/Gal-6P_isomerase"/>
</dbReference>
<dbReference type="InterPro" id="IPR004547">
    <property type="entry name" value="Glucosamine6P_isomerase"/>
</dbReference>
<dbReference type="InterPro" id="IPR018321">
    <property type="entry name" value="Glucosamine6P_isomerase_CS"/>
</dbReference>
<dbReference type="InterPro" id="IPR037171">
    <property type="entry name" value="NagB/RpiA_transferase-like"/>
</dbReference>
<dbReference type="NCBIfam" id="TIGR00502">
    <property type="entry name" value="nagB"/>
    <property type="match status" value="1"/>
</dbReference>
<dbReference type="PANTHER" id="PTHR11280">
    <property type="entry name" value="GLUCOSAMINE-6-PHOSPHATE ISOMERASE"/>
    <property type="match status" value="1"/>
</dbReference>
<dbReference type="PANTHER" id="PTHR11280:SF5">
    <property type="entry name" value="GLUCOSAMINE-6-PHOSPHATE ISOMERASE"/>
    <property type="match status" value="1"/>
</dbReference>
<dbReference type="Pfam" id="PF01182">
    <property type="entry name" value="Glucosamine_iso"/>
    <property type="match status" value="1"/>
</dbReference>
<dbReference type="SUPFAM" id="SSF100950">
    <property type="entry name" value="NagB/RpiA/CoA transferase-like"/>
    <property type="match status" value="1"/>
</dbReference>
<dbReference type="PROSITE" id="PS01161">
    <property type="entry name" value="GLC_GALNAC_ISOMERASE"/>
    <property type="match status" value="1"/>
</dbReference>
<sequence>MKIIQTENYQSMSKLASQHVINTIKQLNKPVLGLATGSTPEGLYQHLIKAYRMHQISFANVSTFNLDEYVGLHKEDKNSYHYYMQKFLFNHVDIPYKNIHLPNGIAKDLSVECTSYEDRIQQAGGIHIQVLGIGRNGHIGFNEPGTSFESQTHVVDLDESTRNANARFFDSIDEVPNQAITMGIQSIMRAKEILLLVSGSEKAEALEKLVNGNVSEEFPASILQTHQNVKIIADKAALQDISYHHFSETM</sequence>
<feature type="chain" id="PRO_0000160157" description="Glucosamine-6-phosphate deaminase">
    <location>
        <begin position="1"/>
        <end position="250"/>
    </location>
</feature>
<feature type="active site" description="Proton acceptor; for enolization step" evidence="1">
    <location>
        <position position="67"/>
    </location>
</feature>
<feature type="active site" description="For ring-opening step" evidence="1">
    <location>
        <position position="136"/>
    </location>
</feature>
<feature type="active site" description="Proton acceptor; for ring-opening step" evidence="1">
    <location>
        <position position="138"/>
    </location>
</feature>
<feature type="active site" description="For ring-opening step" evidence="1">
    <location>
        <position position="143"/>
    </location>
</feature>
<keyword id="KW-0119">Carbohydrate metabolism</keyword>
<keyword id="KW-0378">Hydrolase</keyword>
<keyword id="KW-1185">Reference proteome</keyword>
<evidence type="ECO:0000255" key="1">
    <source>
        <dbReference type="HAMAP-Rule" id="MF_01241"/>
    </source>
</evidence>
<gene>
    <name evidence="1" type="primary">nagB</name>
    <name type="ordered locus">OB0611</name>
</gene>
<proteinExistence type="inferred from homology"/>